<dbReference type="EMBL" id="CP000038">
    <property type="protein sequence ID" value="AAZ86981.1"/>
    <property type="molecule type" value="Genomic_DNA"/>
</dbReference>
<dbReference type="RefSeq" id="WP_001240896.1">
    <property type="nucleotide sequence ID" value="NC_007384.1"/>
</dbReference>
<dbReference type="SMR" id="Q3Z5I1"/>
<dbReference type="GeneID" id="93777248"/>
<dbReference type="KEGG" id="ssn:SSON_0189"/>
<dbReference type="HOGENOM" id="CLU_007664_1_0_6"/>
<dbReference type="Proteomes" id="UP000002529">
    <property type="component" value="Chromosome"/>
</dbReference>
<dbReference type="GO" id="GO:1990063">
    <property type="term" value="C:Bam protein complex"/>
    <property type="evidence" value="ECO:0007669"/>
    <property type="project" value="TreeGrafter"/>
</dbReference>
<dbReference type="GO" id="GO:0043165">
    <property type="term" value="P:Gram-negative-bacterium-type cell outer membrane assembly"/>
    <property type="evidence" value="ECO:0007669"/>
    <property type="project" value="UniProtKB-UniRule"/>
</dbReference>
<dbReference type="GO" id="GO:0051205">
    <property type="term" value="P:protein insertion into membrane"/>
    <property type="evidence" value="ECO:0007669"/>
    <property type="project" value="UniProtKB-UniRule"/>
</dbReference>
<dbReference type="FunFam" id="2.40.160.50:FF:000001">
    <property type="entry name" value="Outer membrane protein assembly factor BamA"/>
    <property type="match status" value="1"/>
</dbReference>
<dbReference type="FunFam" id="3.10.20.310:FF:000001">
    <property type="entry name" value="Outer membrane protein assembly factor BamA"/>
    <property type="match status" value="1"/>
</dbReference>
<dbReference type="FunFam" id="3.10.20.310:FF:000002">
    <property type="entry name" value="Outer membrane protein assembly factor BamA"/>
    <property type="match status" value="1"/>
</dbReference>
<dbReference type="FunFam" id="3.10.20.310:FF:000003">
    <property type="entry name" value="Outer membrane protein assembly factor BamA"/>
    <property type="match status" value="1"/>
</dbReference>
<dbReference type="FunFam" id="3.10.20.310:FF:000004">
    <property type="entry name" value="Outer membrane protein assembly factor BamA"/>
    <property type="match status" value="1"/>
</dbReference>
<dbReference type="FunFam" id="3.10.20.310:FF:000005">
    <property type="entry name" value="Outer membrane protein assembly factor BamA"/>
    <property type="match status" value="1"/>
</dbReference>
<dbReference type="Gene3D" id="3.10.20.310">
    <property type="entry name" value="membrane protein fhac"/>
    <property type="match status" value="5"/>
</dbReference>
<dbReference type="Gene3D" id="2.40.160.50">
    <property type="entry name" value="membrane protein fhac: a member of the omp85/tpsb transporter family"/>
    <property type="match status" value="1"/>
</dbReference>
<dbReference type="HAMAP" id="MF_01430">
    <property type="entry name" value="OM_assembly_BamA"/>
    <property type="match status" value="1"/>
</dbReference>
<dbReference type="InterPro" id="IPR000184">
    <property type="entry name" value="Bac_surfAg_D15"/>
</dbReference>
<dbReference type="InterPro" id="IPR010827">
    <property type="entry name" value="BamA/TamA_POTRA"/>
</dbReference>
<dbReference type="InterPro" id="IPR039910">
    <property type="entry name" value="D15-like"/>
</dbReference>
<dbReference type="InterPro" id="IPR023707">
    <property type="entry name" value="OM_assembly_BamA"/>
</dbReference>
<dbReference type="InterPro" id="IPR034746">
    <property type="entry name" value="POTRA"/>
</dbReference>
<dbReference type="NCBIfam" id="TIGR03303">
    <property type="entry name" value="OM_YaeT"/>
    <property type="match status" value="1"/>
</dbReference>
<dbReference type="NCBIfam" id="NF008287">
    <property type="entry name" value="PRK11067.1"/>
    <property type="match status" value="1"/>
</dbReference>
<dbReference type="PANTHER" id="PTHR12815:SF23">
    <property type="entry name" value="OUTER MEMBRANE PROTEIN ASSEMBLY FACTOR BAMA"/>
    <property type="match status" value="1"/>
</dbReference>
<dbReference type="PANTHER" id="PTHR12815">
    <property type="entry name" value="SORTING AND ASSEMBLY MACHINERY SAMM50 PROTEIN FAMILY MEMBER"/>
    <property type="match status" value="1"/>
</dbReference>
<dbReference type="Pfam" id="PF01103">
    <property type="entry name" value="Omp85"/>
    <property type="match status" value="1"/>
</dbReference>
<dbReference type="Pfam" id="PF07244">
    <property type="entry name" value="POTRA"/>
    <property type="match status" value="4"/>
</dbReference>
<dbReference type="PIRSF" id="PIRSF006076">
    <property type="entry name" value="OM_assembly_OMP85"/>
    <property type="match status" value="1"/>
</dbReference>
<dbReference type="PROSITE" id="PS51779">
    <property type="entry name" value="POTRA"/>
    <property type="match status" value="5"/>
</dbReference>
<organism>
    <name type="scientific">Shigella sonnei (strain Ss046)</name>
    <dbReference type="NCBI Taxonomy" id="300269"/>
    <lineage>
        <taxon>Bacteria</taxon>
        <taxon>Pseudomonadati</taxon>
        <taxon>Pseudomonadota</taxon>
        <taxon>Gammaproteobacteria</taxon>
        <taxon>Enterobacterales</taxon>
        <taxon>Enterobacteriaceae</taxon>
        <taxon>Shigella</taxon>
    </lineage>
</organism>
<keyword id="KW-0998">Cell outer membrane</keyword>
<keyword id="KW-0472">Membrane</keyword>
<keyword id="KW-1185">Reference proteome</keyword>
<keyword id="KW-0677">Repeat</keyword>
<keyword id="KW-0732">Signal</keyword>
<keyword id="KW-0812">Transmembrane</keyword>
<keyword id="KW-1134">Transmembrane beta strand</keyword>
<name>BAMA_SHISS</name>
<proteinExistence type="inferred from homology"/>
<sequence>MAMKKLLIASLLFSSATVYGAEGFVVKDIHFEGLQRVAVGAALLSMPVRTGDTVNDEDISNTIRALFATGNFEDVRVLRDGDTLLVQVKERPTIASITFSGNKSVKDDMLKQNLEASGVRVGESLDRTTIADIEKGLEDFYYSVGKYSASVKAVVTPLPRNRVDLKLVFQEGVSAEIQQINIVGNHAFTTDELISHFQLRDEVPWWNVVGDRKYQKQKLAGDLETLRSYYLDRGYARFNIDSTQVSLTPDKKGIYVTVNITEGDQYKLSGVEVSGNLAGHSAEIEQLTKIEPGELYNGTKVTKMEDDIKKLLGRYGYAYPRVQSMPEINDADKTVKLRVNVDAGNRFYVRKIRFEGNDTSKDAVLRREMRQMEGAWLGSDLVDQGKERLNRLGFFETVDTDTQRVPGSPDQVDVVYKVKERNTGSFNFGIGYGTESGVSFQAGVQQDNWLGTGYAVGINGTKNDYQTYAELSVTNPYFTVDGVSLGGRLFYNDFQADDADLSDYTNKSYGTDVTLGFPINEYNSLRAGLGYVHNSLSNMQPQVAMWRYLYSMGEHPSTSDQDNSFKTDDFTFNYGWTYNKLDRGYFPTDGSRVNLTGKVTIPGSDNEYYKVTLDTATYVPIDDDHKWVVLGRTRWGYGDGLGGKEMPFYENFYAGGSSTVRGFQSNTIGPKAVYFPHQASNYDPDYDYECATQDGAKDLCKSDDAVGGNAMAVASLEFITPTPFISDKYANSVRTSFFWDMGTVWDTNWDSSQYSGYPDYSDPSNIRMSAGIALQWMSPLGPLVFSYAQPFKKYDGDKAEQFQFNIGKTW</sequence>
<accession>Q3Z5I1</accession>
<reference key="1">
    <citation type="journal article" date="2005" name="Nucleic Acids Res.">
        <title>Genome dynamics and diversity of Shigella species, the etiologic agents of bacillary dysentery.</title>
        <authorList>
            <person name="Yang F."/>
            <person name="Yang J."/>
            <person name="Zhang X."/>
            <person name="Chen L."/>
            <person name="Jiang Y."/>
            <person name="Yan Y."/>
            <person name="Tang X."/>
            <person name="Wang J."/>
            <person name="Xiong Z."/>
            <person name="Dong J."/>
            <person name="Xue Y."/>
            <person name="Zhu Y."/>
            <person name="Xu X."/>
            <person name="Sun L."/>
            <person name="Chen S."/>
            <person name="Nie H."/>
            <person name="Peng J."/>
            <person name="Xu J."/>
            <person name="Wang Y."/>
            <person name="Yuan Z."/>
            <person name="Wen Y."/>
            <person name="Yao Z."/>
            <person name="Shen Y."/>
            <person name="Qiang B."/>
            <person name="Hou Y."/>
            <person name="Yu J."/>
            <person name="Jin Q."/>
        </authorList>
    </citation>
    <scope>NUCLEOTIDE SEQUENCE [LARGE SCALE GENOMIC DNA]</scope>
    <source>
        <strain>Ss046</strain>
    </source>
</reference>
<feature type="signal peptide" evidence="1">
    <location>
        <begin position="1"/>
        <end position="20"/>
    </location>
</feature>
<feature type="chain" id="PRO_0000045378" description="Outer membrane protein assembly factor BamA">
    <location>
        <begin position="21"/>
        <end position="810"/>
    </location>
</feature>
<feature type="domain" description="POTRA 1" evidence="2">
    <location>
        <begin position="24"/>
        <end position="91"/>
    </location>
</feature>
<feature type="domain" description="POTRA 2" evidence="2">
    <location>
        <begin position="92"/>
        <end position="172"/>
    </location>
</feature>
<feature type="domain" description="POTRA 3" evidence="2">
    <location>
        <begin position="175"/>
        <end position="263"/>
    </location>
</feature>
<feature type="domain" description="POTRA 4" evidence="2">
    <location>
        <begin position="266"/>
        <end position="344"/>
    </location>
</feature>
<feature type="domain" description="POTRA 5" evidence="2">
    <location>
        <begin position="347"/>
        <end position="421"/>
    </location>
</feature>
<gene>
    <name evidence="1" type="primary">bamA</name>
    <name type="synonym">yaeT</name>
    <name type="ordered locus">SSON_0189</name>
</gene>
<comment type="function">
    <text evidence="1">Part of the outer membrane protein assembly complex, which is involved in assembly and insertion of beta-barrel proteins into the outer membrane. Constitutes, with BamD, the core component of the assembly machinery.</text>
</comment>
<comment type="subunit">
    <text evidence="1">Part of the Bam complex, which is composed of the outer membrane protein BamA, and four lipoproteins BamB, BamC, BamD and BamE.</text>
</comment>
<comment type="subcellular location">
    <subcellularLocation>
        <location evidence="1">Cell outer membrane</location>
    </subcellularLocation>
</comment>
<comment type="similarity">
    <text evidence="1">Belongs to the BamA family.</text>
</comment>
<evidence type="ECO:0000255" key="1">
    <source>
        <dbReference type="HAMAP-Rule" id="MF_01430"/>
    </source>
</evidence>
<evidence type="ECO:0000255" key="2">
    <source>
        <dbReference type="PROSITE-ProRule" id="PRU01115"/>
    </source>
</evidence>
<protein>
    <recommendedName>
        <fullName evidence="1">Outer membrane protein assembly factor BamA</fullName>
    </recommendedName>
</protein>